<reference evidence="3" key="1">
    <citation type="submission" date="2018-10" db="UniProtKB">
        <authorList>
            <person name="Vassilevski A."/>
            <person name="Kozlov S."/>
            <person name="Grishin E."/>
        </authorList>
    </citation>
    <scope>PROTEIN SEQUENCE</scope>
    <scope>SUBCELLULAR LOCATION</scope>
    <scope>MASS SPECTROMETRY</scope>
</reference>
<proteinExistence type="evidence at protein level"/>
<protein>
    <recommendedName>
        <fullName evidence="2">Oxyopinin-3b</fullName>
        <shortName evidence="2">Oxt-3b</shortName>
    </recommendedName>
</protein>
<accession>C0HLG0</accession>
<keyword id="KW-0929">Antimicrobial</keyword>
<keyword id="KW-0204">Cytolysis</keyword>
<keyword id="KW-0903">Direct protein sequencing</keyword>
<keyword id="KW-0964">Secreted</keyword>
<keyword id="KW-0800">Toxin</keyword>
<sequence length="26" mass="3138">GVKDYFKKLLQKVINKIKSFRKKQEA</sequence>
<feature type="chain" id="PRO_0000446059" description="Oxyopinin-3b">
    <location>
        <begin position="1"/>
        <end position="26"/>
    </location>
</feature>
<comment type="function">
    <text evidence="3">May have cytolytic and antimicrobial activity.</text>
</comment>
<comment type="subcellular location">
    <subcellularLocation>
        <location evidence="1">Secreted</location>
    </subcellularLocation>
</comment>
<comment type="tissue specificity">
    <text evidence="4">Expressed by the venom gland.</text>
</comment>
<comment type="mass spectrometry" mass="3136.0" error="0.5" method="MALDI" evidence="1">
    <text>Monoisotopic mass.</text>
</comment>
<organism>
    <name type="scientific">Oxyopes takobius</name>
    <name type="common">Lynx spider</name>
    <name type="synonym">Oxyopes foliiformis</name>
    <dbReference type="NCBI Taxonomy" id="666126"/>
    <lineage>
        <taxon>Eukaryota</taxon>
        <taxon>Metazoa</taxon>
        <taxon>Ecdysozoa</taxon>
        <taxon>Arthropoda</taxon>
        <taxon>Chelicerata</taxon>
        <taxon>Arachnida</taxon>
        <taxon>Araneae</taxon>
        <taxon>Araneomorphae</taxon>
        <taxon>Entelegynae</taxon>
        <taxon>Lycosoidea</taxon>
        <taxon>Oxyopidae</taxon>
        <taxon>Oxyopes</taxon>
    </lineage>
</organism>
<evidence type="ECO:0000269" key="1">
    <source ref="1"/>
</evidence>
<evidence type="ECO:0000303" key="2">
    <source ref="1"/>
</evidence>
<evidence type="ECO:0000305" key="3"/>
<evidence type="ECO:0000305" key="4">
    <source ref="1"/>
</evidence>
<name>TOP3B_OXYTA</name>
<dbReference type="GO" id="GO:0005576">
    <property type="term" value="C:extracellular region"/>
    <property type="evidence" value="ECO:0007669"/>
    <property type="project" value="UniProtKB-SubCell"/>
</dbReference>
<dbReference type="GO" id="GO:0090729">
    <property type="term" value="F:toxin activity"/>
    <property type="evidence" value="ECO:0007669"/>
    <property type="project" value="UniProtKB-KW"/>
</dbReference>
<dbReference type="GO" id="GO:0031640">
    <property type="term" value="P:killing of cells of another organism"/>
    <property type="evidence" value="ECO:0007669"/>
    <property type="project" value="UniProtKB-KW"/>
</dbReference>